<evidence type="ECO:0000255" key="1">
    <source>
        <dbReference type="HAMAP-Rule" id="MF_00688"/>
    </source>
</evidence>
<evidence type="ECO:0000256" key="2">
    <source>
        <dbReference type="SAM" id="MobiDB-lite"/>
    </source>
</evidence>
<proteinExistence type="inferred from homology"/>
<feature type="chain" id="PRO_1000131958" description="Leucyl/phenylalanyl-tRNA--protein transferase">
    <location>
        <begin position="1"/>
        <end position="243"/>
    </location>
</feature>
<feature type="region of interest" description="Disordered" evidence="2">
    <location>
        <begin position="1"/>
        <end position="22"/>
    </location>
</feature>
<gene>
    <name evidence="1" type="primary">aat</name>
    <name type="ordered locus">XfasM23_0701</name>
</gene>
<organism>
    <name type="scientific">Xylella fastidiosa (strain M23)</name>
    <dbReference type="NCBI Taxonomy" id="405441"/>
    <lineage>
        <taxon>Bacteria</taxon>
        <taxon>Pseudomonadati</taxon>
        <taxon>Pseudomonadota</taxon>
        <taxon>Gammaproteobacteria</taxon>
        <taxon>Lysobacterales</taxon>
        <taxon>Lysobacteraceae</taxon>
        <taxon>Xylella</taxon>
    </lineage>
</organism>
<accession>B2I9Y3</accession>
<reference key="1">
    <citation type="journal article" date="2010" name="J. Bacteriol.">
        <title>Whole genome sequences of two Xylella fastidiosa strains (M12 and M23) causing almond leaf scorch disease in California.</title>
        <authorList>
            <person name="Chen J."/>
            <person name="Xie G."/>
            <person name="Han S."/>
            <person name="Chertkov O."/>
            <person name="Sims D."/>
            <person name="Civerolo E.L."/>
        </authorList>
    </citation>
    <scope>NUCLEOTIDE SEQUENCE [LARGE SCALE GENOMIC DNA]</scope>
    <source>
        <strain>M23</strain>
    </source>
</reference>
<keyword id="KW-0012">Acyltransferase</keyword>
<keyword id="KW-0963">Cytoplasm</keyword>
<keyword id="KW-0808">Transferase</keyword>
<sequence length="243" mass="27321">MHSQPYLLSPTPNTPFPPAEHALHEPNGLLAIGGDLTPQRLLAAYRSGIFPWFTEGQPPLWWSPDPRTVFHSDNIHLSRRFRRSLRTSTWTVRADTMFAAVIDACASTPRRGQDGTWITANMREAYLTLHQHGYAHSVEVFDGTMLVGGIYGVAIGRMFFGESMFSTHNGASKIALASLAYFLHTHSVPLIDAQVENQHLLNLGAERWPRRDFLTSVRRLITQTELPACWSVLFGEKLSRDLV</sequence>
<dbReference type="EC" id="2.3.2.6" evidence="1"/>
<dbReference type="EMBL" id="CP001011">
    <property type="protein sequence ID" value="ACB92142.1"/>
    <property type="molecule type" value="Genomic_DNA"/>
</dbReference>
<dbReference type="RefSeq" id="WP_004089137.1">
    <property type="nucleotide sequence ID" value="NC_010577.1"/>
</dbReference>
<dbReference type="SMR" id="B2I9Y3"/>
<dbReference type="GeneID" id="93904445"/>
<dbReference type="KEGG" id="xfn:XfasM23_0701"/>
<dbReference type="HOGENOM" id="CLU_075045_0_0_6"/>
<dbReference type="Proteomes" id="UP000001698">
    <property type="component" value="Chromosome"/>
</dbReference>
<dbReference type="GO" id="GO:0005737">
    <property type="term" value="C:cytoplasm"/>
    <property type="evidence" value="ECO:0007669"/>
    <property type="project" value="UniProtKB-SubCell"/>
</dbReference>
<dbReference type="GO" id="GO:0008914">
    <property type="term" value="F:leucyl-tRNA--protein transferase activity"/>
    <property type="evidence" value="ECO:0007669"/>
    <property type="project" value="UniProtKB-UniRule"/>
</dbReference>
<dbReference type="GO" id="GO:0030163">
    <property type="term" value="P:protein catabolic process"/>
    <property type="evidence" value="ECO:0007669"/>
    <property type="project" value="UniProtKB-UniRule"/>
</dbReference>
<dbReference type="FunFam" id="3.30.70.3550:FF:000001">
    <property type="entry name" value="Leucyl/phenylalanyl-tRNA--protein transferase"/>
    <property type="match status" value="1"/>
</dbReference>
<dbReference type="Gene3D" id="3.40.630.70">
    <property type="entry name" value="Leucyl/phenylalanyl-tRNA-protein transferase, C-terminal domain"/>
    <property type="match status" value="1"/>
</dbReference>
<dbReference type="Gene3D" id="3.30.70.3550">
    <property type="entry name" value="Leucyl/phenylalanyl-tRNA-protein transferase, N-terminal domain"/>
    <property type="match status" value="1"/>
</dbReference>
<dbReference type="HAMAP" id="MF_00688">
    <property type="entry name" value="Leu_Phe_trans"/>
    <property type="match status" value="1"/>
</dbReference>
<dbReference type="InterPro" id="IPR016181">
    <property type="entry name" value="Acyl_CoA_acyltransferase"/>
</dbReference>
<dbReference type="InterPro" id="IPR004616">
    <property type="entry name" value="Leu/Phe-tRNA_Trfase"/>
</dbReference>
<dbReference type="InterPro" id="IPR042203">
    <property type="entry name" value="Leu/Phe-tRNA_Trfase_C"/>
</dbReference>
<dbReference type="InterPro" id="IPR042221">
    <property type="entry name" value="Leu/Phe-tRNA_Trfase_N"/>
</dbReference>
<dbReference type="NCBIfam" id="TIGR00667">
    <property type="entry name" value="aat"/>
    <property type="match status" value="1"/>
</dbReference>
<dbReference type="PANTHER" id="PTHR30098">
    <property type="entry name" value="LEUCYL/PHENYLALANYL-TRNA--PROTEIN TRANSFERASE"/>
    <property type="match status" value="1"/>
</dbReference>
<dbReference type="PANTHER" id="PTHR30098:SF2">
    <property type="entry name" value="LEUCYL_PHENYLALANYL-TRNA--PROTEIN TRANSFERASE"/>
    <property type="match status" value="1"/>
</dbReference>
<dbReference type="Pfam" id="PF03588">
    <property type="entry name" value="Leu_Phe_trans"/>
    <property type="match status" value="1"/>
</dbReference>
<dbReference type="SUPFAM" id="SSF55729">
    <property type="entry name" value="Acyl-CoA N-acyltransferases (Nat)"/>
    <property type="match status" value="1"/>
</dbReference>
<protein>
    <recommendedName>
        <fullName evidence="1">Leucyl/phenylalanyl-tRNA--protein transferase</fullName>
        <ecNumber evidence="1">2.3.2.6</ecNumber>
    </recommendedName>
    <alternativeName>
        <fullName evidence="1">L/F-transferase</fullName>
    </alternativeName>
    <alternativeName>
        <fullName evidence="1">Leucyltransferase</fullName>
    </alternativeName>
    <alternativeName>
        <fullName evidence="1">Phenyalanyltransferase</fullName>
    </alternativeName>
</protein>
<comment type="function">
    <text evidence="1">Functions in the N-end rule pathway of protein degradation where it conjugates Leu, Phe and, less efficiently, Met from aminoacyl-tRNAs to the N-termini of proteins containing an N-terminal arginine or lysine.</text>
</comment>
<comment type="catalytic activity">
    <reaction evidence="1">
        <text>N-terminal L-lysyl-[protein] + L-leucyl-tRNA(Leu) = N-terminal L-leucyl-L-lysyl-[protein] + tRNA(Leu) + H(+)</text>
        <dbReference type="Rhea" id="RHEA:12340"/>
        <dbReference type="Rhea" id="RHEA-COMP:9613"/>
        <dbReference type="Rhea" id="RHEA-COMP:9622"/>
        <dbReference type="Rhea" id="RHEA-COMP:12670"/>
        <dbReference type="Rhea" id="RHEA-COMP:12671"/>
        <dbReference type="ChEBI" id="CHEBI:15378"/>
        <dbReference type="ChEBI" id="CHEBI:65249"/>
        <dbReference type="ChEBI" id="CHEBI:78442"/>
        <dbReference type="ChEBI" id="CHEBI:78494"/>
        <dbReference type="ChEBI" id="CHEBI:133043"/>
        <dbReference type="EC" id="2.3.2.6"/>
    </reaction>
</comment>
<comment type="catalytic activity">
    <reaction evidence="1">
        <text>N-terminal L-arginyl-[protein] + L-leucyl-tRNA(Leu) = N-terminal L-leucyl-L-arginyl-[protein] + tRNA(Leu) + H(+)</text>
        <dbReference type="Rhea" id="RHEA:50416"/>
        <dbReference type="Rhea" id="RHEA-COMP:9613"/>
        <dbReference type="Rhea" id="RHEA-COMP:9622"/>
        <dbReference type="Rhea" id="RHEA-COMP:12672"/>
        <dbReference type="Rhea" id="RHEA-COMP:12673"/>
        <dbReference type="ChEBI" id="CHEBI:15378"/>
        <dbReference type="ChEBI" id="CHEBI:64719"/>
        <dbReference type="ChEBI" id="CHEBI:78442"/>
        <dbReference type="ChEBI" id="CHEBI:78494"/>
        <dbReference type="ChEBI" id="CHEBI:133044"/>
        <dbReference type="EC" id="2.3.2.6"/>
    </reaction>
</comment>
<comment type="catalytic activity">
    <reaction evidence="1">
        <text>L-phenylalanyl-tRNA(Phe) + an N-terminal L-alpha-aminoacyl-[protein] = an N-terminal L-phenylalanyl-L-alpha-aminoacyl-[protein] + tRNA(Phe)</text>
        <dbReference type="Rhea" id="RHEA:43632"/>
        <dbReference type="Rhea" id="RHEA-COMP:9668"/>
        <dbReference type="Rhea" id="RHEA-COMP:9699"/>
        <dbReference type="Rhea" id="RHEA-COMP:10636"/>
        <dbReference type="Rhea" id="RHEA-COMP:10637"/>
        <dbReference type="ChEBI" id="CHEBI:78442"/>
        <dbReference type="ChEBI" id="CHEBI:78531"/>
        <dbReference type="ChEBI" id="CHEBI:78597"/>
        <dbReference type="ChEBI" id="CHEBI:83561"/>
        <dbReference type="EC" id="2.3.2.6"/>
    </reaction>
</comment>
<comment type="subcellular location">
    <subcellularLocation>
        <location evidence="1">Cytoplasm</location>
    </subcellularLocation>
</comment>
<comment type="similarity">
    <text evidence="1">Belongs to the L/F-transferase family.</text>
</comment>
<name>LFTR_XYLF2</name>